<accession>Q55FJ2</accession>
<evidence type="ECO:0000250" key="1">
    <source>
        <dbReference type="UniProtKB" id="A4D1P6"/>
    </source>
</evidence>
<evidence type="ECO:0000256" key="2">
    <source>
        <dbReference type="SAM" id="MobiDB-lite"/>
    </source>
</evidence>
<evidence type="ECO:0000305" key="3"/>
<comment type="function">
    <text evidence="1">Functions as a negative regulator of the PI3 kinase/PI3K activity associated with endosomal membranes. By modifying the phosphatidylinositol 3-phosphate/PtdInsP3 content of endosomal membranes may regulate endosome fusion, recycling, sorting and early to late endosome transport.</text>
</comment>
<comment type="subcellular location">
    <subcellularLocation>
        <location evidence="1">Early endosome membrane</location>
        <topology evidence="1">Peripheral membrane protein</topology>
    </subcellularLocation>
    <subcellularLocation>
        <location evidence="1">Late endosome membrane</location>
    </subcellularLocation>
</comment>
<comment type="similarity">
    <text evidence="3">Belongs to the WD repeat WDR91 family.</text>
</comment>
<proteinExistence type="inferred from homology"/>
<dbReference type="EMBL" id="AAFI02000003">
    <property type="protein sequence ID" value="EAL73495.1"/>
    <property type="molecule type" value="Genomic_DNA"/>
</dbReference>
<dbReference type="RefSeq" id="XP_647541.1">
    <property type="nucleotide sequence ID" value="XM_642449.1"/>
</dbReference>
<dbReference type="SMR" id="Q55FJ2"/>
<dbReference type="FunCoup" id="Q55FJ2">
    <property type="interactions" value="7"/>
</dbReference>
<dbReference type="STRING" id="44689.Q55FJ2"/>
<dbReference type="PaxDb" id="44689-DDB0233074"/>
<dbReference type="EnsemblProtists" id="EAL73495">
    <property type="protein sequence ID" value="EAL73495"/>
    <property type="gene ID" value="DDB_G0268084"/>
</dbReference>
<dbReference type="GeneID" id="8616348"/>
<dbReference type="KEGG" id="ddi:DDB_G0268084"/>
<dbReference type="dictyBase" id="DDB_G0268084">
    <property type="gene designation" value="wdr91"/>
</dbReference>
<dbReference type="VEuPathDB" id="AmoebaDB:DDB_G0268084"/>
<dbReference type="eggNOG" id="KOG1333">
    <property type="taxonomic scope" value="Eukaryota"/>
</dbReference>
<dbReference type="HOGENOM" id="CLU_022078_0_0_1"/>
<dbReference type="InParanoid" id="Q55FJ2"/>
<dbReference type="OMA" id="KMYLVNA"/>
<dbReference type="PhylomeDB" id="Q55FJ2"/>
<dbReference type="PRO" id="PR:Q55FJ2"/>
<dbReference type="Proteomes" id="UP000002195">
    <property type="component" value="Chromosome 1"/>
</dbReference>
<dbReference type="GO" id="GO:0005829">
    <property type="term" value="C:cytosol"/>
    <property type="evidence" value="ECO:0000250"/>
    <property type="project" value="UniProtKB"/>
</dbReference>
<dbReference type="GO" id="GO:0031901">
    <property type="term" value="C:early endosome membrane"/>
    <property type="evidence" value="ECO:0000250"/>
    <property type="project" value="UniProtKB"/>
</dbReference>
<dbReference type="GO" id="GO:0010008">
    <property type="term" value="C:endosome membrane"/>
    <property type="evidence" value="ECO:0000250"/>
    <property type="project" value="UniProtKB"/>
</dbReference>
<dbReference type="GO" id="GO:0031902">
    <property type="term" value="C:late endosome membrane"/>
    <property type="evidence" value="ECO:0000250"/>
    <property type="project" value="UniProtKB"/>
</dbReference>
<dbReference type="GO" id="GO:0141039">
    <property type="term" value="F:phosphatidylinositol 3-kinase inhibitor activity"/>
    <property type="evidence" value="ECO:0000250"/>
    <property type="project" value="UniProtKB"/>
</dbReference>
<dbReference type="GO" id="GO:0035014">
    <property type="term" value="F:phosphatidylinositol 3-kinase regulator activity"/>
    <property type="evidence" value="ECO:0000318"/>
    <property type="project" value="GO_Central"/>
</dbReference>
<dbReference type="GO" id="GO:0045022">
    <property type="term" value="P:early endosome to late endosome transport"/>
    <property type="evidence" value="ECO:0000250"/>
    <property type="project" value="UniProtKB"/>
</dbReference>
<dbReference type="GO" id="GO:0051898">
    <property type="term" value="P:negative regulation of phosphatidylinositol 3-kinase/protein kinase B signal transduction"/>
    <property type="evidence" value="ECO:0007669"/>
    <property type="project" value="InterPro"/>
</dbReference>
<dbReference type="CDD" id="cd14686">
    <property type="entry name" value="bZIP"/>
    <property type="match status" value="1"/>
</dbReference>
<dbReference type="Gene3D" id="2.130.10.10">
    <property type="entry name" value="YVTN repeat-like/Quinoprotein amine dehydrogenase"/>
    <property type="match status" value="3"/>
</dbReference>
<dbReference type="InterPro" id="IPR024977">
    <property type="entry name" value="Apc4-like_WD40_dom"/>
</dbReference>
<dbReference type="InterPro" id="IPR056327">
    <property type="entry name" value="ARMC9_CTLH-like_dom"/>
</dbReference>
<dbReference type="InterPro" id="IPR015943">
    <property type="entry name" value="WD40/YVTN_repeat-like_dom_sf"/>
</dbReference>
<dbReference type="InterPro" id="IPR019775">
    <property type="entry name" value="WD40_repeat_CS"/>
</dbReference>
<dbReference type="InterPro" id="IPR036322">
    <property type="entry name" value="WD40_repeat_dom_sf"/>
</dbReference>
<dbReference type="InterPro" id="IPR001680">
    <property type="entry name" value="WD40_rpt"/>
</dbReference>
<dbReference type="InterPro" id="IPR039724">
    <property type="entry name" value="WDR91"/>
</dbReference>
<dbReference type="PANTHER" id="PTHR13083">
    <property type="entry name" value="WD REPEAT-CONTAINING PROTEIN 91"/>
    <property type="match status" value="1"/>
</dbReference>
<dbReference type="PANTHER" id="PTHR13083:SF3">
    <property type="entry name" value="WD REPEAT-CONTAINING PROTEIN 91"/>
    <property type="match status" value="1"/>
</dbReference>
<dbReference type="Pfam" id="PF12894">
    <property type="entry name" value="ANAPC4_WD40"/>
    <property type="match status" value="1"/>
</dbReference>
<dbReference type="Pfam" id="PF23138">
    <property type="entry name" value="CTLH_Armc9"/>
    <property type="match status" value="1"/>
</dbReference>
<dbReference type="Pfam" id="PF00400">
    <property type="entry name" value="WD40"/>
    <property type="match status" value="3"/>
</dbReference>
<dbReference type="SMART" id="SM00320">
    <property type="entry name" value="WD40"/>
    <property type="match status" value="7"/>
</dbReference>
<dbReference type="SUPFAM" id="SSF50978">
    <property type="entry name" value="WD40 repeat-like"/>
    <property type="match status" value="1"/>
</dbReference>
<dbReference type="PROSITE" id="PS00678">
    <property type="entry name" value="WD_REPEATS_1"/>
    <property type="match status" value="1"/>
</dbReference>
<dbReference type="PROSITE" id="PS50082">
    <property type="entry name" value="WD_REPEATS_2"/>
    <property type="match status" value="4"/>
</dbReference>
<dbReference type="PROSITE" id="PS50294">
    <property type="entry name" value="WD_REPEATS_REGION"/>
    <property type="match status" value="1"/>
</dbReference>
<gene>
    <name type="primary">wdr91</name>
    <name type="ORF">DDB_G0268084</name>
</gene>
<name>WDR91_DICDI</name>
<protein>
    <recommendedName>
        <fullName evidence="3">WD repeat-containing protein 91 homolog</fullName>
    </recommendedName>
</protein>
<feature type="chain" id="PRO_0000327477" description="WD repeat-containing protein 91 homolog">
    <location>
        <begin position="1"/>
        <end position="766"/>
    </location>
</feature>
<feature type="repeat" description="WD 1">
    <location>
        <begin position="462"/>
        <end position="501"/>
    </location>
</feature>
<feature type="repeat" description="WD 2">
    <location>
        <begin position="503"/>
        <end position="542"/>
    </location>
</feature>
<feature type="repeat" description="WD 3">
    <location>
        <begin position="547"/>
        <end position="591"/>
    </location>
</feature>
<feature type="repeat" description="WD 4">
    <location>
        <begin position="594"/>
        <end position="633"/>
    </location>
</feature>
<feature type="repeat" description="WD 5">
    <location>
        <begin position="636"/>
        <end position="675"/>
    </location>
</feature>
<feature type="repeat" description="WD 6">
    <location>
        <begin position="684"/>
        <end position="723"/>
    </location>
</feature>
<feature type="repeat" description="WD 7">
    <location>
        <begin position="726"/>
        <end position="766"/>
    </location>
</feature>
<feature type="region of interest" description="Disordered" evidence="2">
    <location>
        <begin position="88"/>
        <end position="108"/>
    </location>
</feature>
<feature type="region of interest" description="Disordered" evidence="2">
    <location>
        <begin position="249"/>
        <end position="415"/>
    </location>
</feature>
<feature type="compositionally biased region" description="Low complexity" evidence="2">
    <location>
        <begin position="253"/>
        <end position="268"/>
    </location>
</feature>
<feature type="compositionally biased region" description="Polar residues" evidence="2">
    <location>
        <begin position="269"/>
        <end position="304"/>
    </location>
</feature>
<feature type="compositionally biased region" description="Low complexity" evidence="2">
    <location>
        <begin position="339"/>
        <end position="412"/>
    </location>
</feature>
<keyword id="KW-0967">Endosome</keyword>
<keyword id="KW-0472">Membrane</keyword>
<keyword id="KW-1185">Reference proteome</keyword>
<keyword id="KW-0677">Repeat</keyword>
<keyword id="KW-0853">WD repeat</keyword>
<organism>
    <name type="scientific">Dictyostelium discoideum</name>
    <name type="common">Social amoeba</name>
    <dbReference type="NCBI Taxonomy" id="44689"/>
    <lineage>
        <taxon>Eukaryota</taxon>
        <taxon>Amoebozoa</taxon>
        <taxon>Evosea</taxon>
        <taxon>Eumycetozoa</taxon>
        <taxon>Dictyostelia</taxon>
        <taxon>Dictyosteliales</taxon>
        <taxon>Dictyosteliaceae</taxon>
        <taxon>Dictyostelium</taxon>
    </lineage>
</organism>
<reference key="1">
    <citation type="journal article" date="2005" name="Nature">
        <title>The genome of the social amoeba Dictyostelium discoideum.</title>
        <authorList>
            <person name="Eichinger L."/>
            <person name="Pachebat J.A."/>
            <person name="Gloeckner G."/>
            <person name="Rajandream M.A."/>
            <person name="Sucgang R."/>
            <person name="Berriman M."/>
            <person name="Song J."/>
            <person name="Olsen R."/>
            <person name="Szafranski K."/>
            <person name="Xu Q."/>
            <person name="Tunggal B."/>
            <person name="Kummerfeld S."/>
            <person name="Madera M."/>
            <person name="Konfortov B.A."/>
            <person name="Rivero F."/>
            <person name="Bankier A.T."/>
            <person name="Lehmann R."/>
            <person name="Hamlin N."/>
            <person name="Davies R."/>
            <person name="Gaudet P."/>
            <person name="Fey P."/>
            <person name="Pilcher K."/>
            <person name="Chen G."/>
            <person name="Saunders D."/>
            <person name="Sodergren E.J."/>
            <person name="Davis P."/>
            <person name="Kerhornou A."/>
            <person name="Nie X."/>
            <person name="Hall N."/>
            <person name="Anjard C."/>
            <person name="Hemphill L."/>
            <person name="Bason N."/>
            <person name="Farbrother P."/>
            <person name="Desany B."/>
            <person name="Just E."/>
            <person name="Morio T."/>
            <person name="Rost R."/>
            <person name="Churcher C.M."/>
            <person name="Cooper J."/>
            <person name="Haydock S."/>
            <person name="van Driessche N."/>
            <person name="Cronin A."/>
            <person name="Goodhead I."/>
            <person name="Muzny D.M."/>
            <person name="Mourier T."/>
            <person name="Pain A."/>
            <person name="Lu M."/>
            <person name="Harper D."/>
            <person name="Lindsay R."/>
            <person name="Hauser H."/>
            <person name="James K.D."/>
            <person name="Quiles M."/>
            <person name="Madan Babu M."/>
            <person name="Saito T."/>
            <person name="Buchrieser C."/>
            <person name="Wardroper A."/>
            <person name="Felder M."/>
            <person name="Thangavelu M."/>
            <person name="Johnson D."/>
            <person name="Knights A."/>
            <person name="Loulseged H."/>
            <person name="Mungall K.L."/>
            <person name="Oliver K."/>
            <person name="Price C."/>
            <person name="Quail M.A."/>
            <person name="Urushihara H."/>
            <person name="Hernandez J."/>
            <person name="Rabbinowitsch E."/>
            <person name="Steffen D."/>
            <person name="Sanders M."/>
            <person name="Ma J."/>
            <person name="Kohara Y."/>
            <person name="Sharp S."/>
            <person name="Simmonds M.N."/>
            <person name="Spiegler S."/>
            <person name="Tivey A."/>
            <person name="Sugano S."/>
            <person name="White B."/>
            <person name="Walker D."/>
            <person name="Woodward J.R."/>
            <person name="Winckler T."/>
            <person name="Tanaka Y."/>
            <person name="Shaulsky G."/>
            <person name="Schleicher M."/>
            <person name="Weinstock G.M."/>
            <person name="Rosenthal A."/>
            <person name="Cox E.C."/>
            <person name="Chisholm R.L."/>
            <person name="Gibbs R.A."/>
            <person name="Loomis W.F."/>
            <person name="Platzer M."/>
            <person name="Kay R.R."/>
            <person name="Williams J.G."/>
            <person name="Dear P.H."/>
            <person name="Noegel A.A."/>
            <person name="Barrell B.G."/>
            <person name="Kuspa A."/>
        </authorList>
    </citation>
    <scope>NUCLEOTIDE SEQUENCE [LARGE SCALE GENOMIC DNA]</scope>
    <source>
        <strain>AX4</strain>
    </source>
</reference>
<sequence>MNSSNLNYLDELVKEYLIFRGFTQTNHYFSLEKKGDKLKGFQVDRILEQINIYISSYDINHLVELWNFLDITFFSKIDYNKSNAYNNNNNNNNNYNSNHNSNGSYTSYRNNNNDLQSTIKKLSSSLRKYYVIYAINNNKIDKVKEFFDQYSLELLKDPDWQSWFALPYIRNPQSDPLFEIYFSKTWSEAFSLSLRNFLSTIFKNIPLPKILQFNLERQNRKRLETQVENLLSINEELRSQVDKLEYQNKRDQNNSGSNNNSNNNSNSGFTIGNVSQRKESNVNNFNSGNDLNSSNEREVNSFSRVSKRFEPRSTSSTNIAAMDDDDNKPMIGIGRSRKSISTNSVNSNNNINNNNTSNTNTNTNTNTNTNTNSNSNTNTNTNSNSNTNTSNNNSNSNNNNNGTNTNVTNNNGFQHLNLSGFEMTEIDENGFKKKSSNGLNGSDGIENGELVYNIESQEVCTSHSSAITRCKFLSNGSKIASSSIDGTVRLWNVGFSSRQTTIYCLSEVASLEWENRSKLLLCGTIDSKIKIWNSLTDKAIGDINTSIEFPRVEDIACNPNGNSFATSSINNGRTDGVVYTWNLRTLKTEEKLSSSGAVINSMSFNSTGTLLSTGCVDGTIRIFDIKSGSPIAGWQAHSNEILSVQFSSDENRLYSLGKDGKLYQWNIHSMGKPVKEYDYPGFLVDPHRTTKISFNHNQSSFLVGTNNKFALLYNIDQSSPILQISGHTGPVVTCDWNSSSQSDVIITGSLDKTIRLTKLSKSFNNL</sequence>